<proteinExistence type="inferred from homology"/>
<organism>
    <name type="scientific">Bordetella avium (strain 197N)</name>
    <dbReference type="NCBI Taxonomy" id="360910"/>
    <lineage>
        <taxon>Bacteria</taxon>
        <taxon>Pseudomonadati</taxon>
        <taxon>Pseudomonadota</taxon>
        <taxon>Betaproteobacteria</taxon>
        <taxon>Burkholderiales</taxon>
        <taxon>Alcaligenaceae</taxon>
        <taxon>Bordetella</taxon>
    </lineage>
</organism>
<keyword id="KW-0450">Lipoyl</keyword>
<keyword id="KW-1185">Reference proteome</keyword>
<evidence type="ECO:0000255" key="1">
    <source>
        <dbReference type="HAMAP-Rule" id="MF_00272"/>
    </source>
</evidence>
<evidence type="ECO:0000255" key="2">
    <source>
        <dbReference type="PROSITE-ProRule" id="PRU01066"/>
    </source>
</evidence>
<accession>Q2KYL9</accession>
<dbReference type="EMBL" id="AM167904">
    <property type="protein sequence ID" value="CAJ48097.1"/>
    <property type="molecule type" value="Genomic_DNA"/>
</dbReference>
<dbReference type="RefSeq" id="WP_012416188.1">
    <property type="nucleotide sequence ID" value="NC_010645.1"/>
</dbReference>
<dbReference type="SMR" id="Q2KYL9"/>
<dbReference type="STRING" id="360910.BAV0492"/>
<dbReference type="GeneID" id="92936330"/>
<dbReference type="KEGG" id="bav:BAV0492"/>
<dbReference type="eggNOG" id="COG0509">
    <property type="taxonomic scope" value="Bacteria"/>
</dbReference>
<dbReference type="HOGENOM" id="CLU_097408_2_0_4"/>
<dbReference type="OrthoDB" id="9796712at2"/>
<dbReference type="Proteomes" id="UP000001977">
    <property type="component" value="Chromosome"/>
</dbReference>
<dbReference type="GO" id="GO:0005829">
    <property type="term" value="C:cytosol"/>
    <property type="evidence" value="ECO:0007669"/>
    <property type="project" value="TreeGrafter"/>
</dbReference>
<dbReference type="GO" id="GO:0005960">
    <property type="term" value="C:glycine cleavage complex"/>
    <property type="evidence" value="ECO:0007669"/>
    <property type="project" value="InterPro"/>
</dbReference>
<dbReference type="GO" id="GO:0019464">
    <property type="term" value="P:glycine decarboxylation via glycine cleavage system"/>
    <property type="evidence" value="ECO:0007669"/>
    <property type="project" value="UniProtKB-UniRule"/>
</dbReference>
<dbReference type="CDD" id="cd06848">
    <property type="entry name" value="GCS_H"/>
    <property type="match status" value="1"/>
</dbReference>
<dbReference type="Gene3D" id="2.40.50.100">
    <property type="match status" value="1"/>
</dbReference>
<dbReference type="HAMAP" id="MF_00272">
    <property type="entry name" value="GcvH"/>
    <property type="match status" value="1"/>
</dbReference>
<dbReference type="InterPro" id="IPR003016">
    <property type="entry name" value="2-oxoA_DH_lipoyl-BS"/>
</dbReference>
<dbReference type="InterPro" id="IPR000089">
    <property type="entry name" value="Biotin_lipoyl"/>
</dbReference>
<dbReference type="InterPro" id="IPR002930">
    <property type="entry name" value="GCV_H"/>
</dbReference>
<dbReference type="InterPro" id="IPR033753">
    <property type="entry name" value="GCV_H/Fam206"/>
</dbReference>
<dbReference type="InterPro" id="IPR017453">
    <property type="entry name" value="GCV_H_sub"/>
</dbReference>
<dbReference type="InterPro" id="IPR011053">
    <property type="entry name" value="Single_hybrid_motif"/>
</dbReference>
<dbReference type="NCBIfam" id="TIGR00527">
    <property type="entry name" value="gcvH"/>
    <property type="match status" value="1"/>
</dbReference>
<dbReference type="NCBIfam" id="NF002270">
    <property type="entry name" value="PRK01202.1"/>
    <property type="match status" value="1"/>
</dbReference>
<dbReference type="PANTHER" id="PTHR11715">
    <property type="entry name" value="GLYCINE CLEAVAGE SYSTEM H PROTEIN"/>
    <property type="match status" value="1"/>
</dbReference>
<dbReference type="PANTHER" id="PTHR11715:SF3">
    <property type="entry name" value="GLYCINE CLEAVAGE SYSTEM H PROTEIN-RELATED"/>
    <property type="match status" value="1"/>
</dbReference>
<dbReference type="Pfam" id="PF01597">
    <property type="entry name" value="GCV_H"/>
    <property type="match status" value="1"/>
</dbReference>
<dbReference type="SUPFAM" id="SSF51230">
    <property type="entry name" value="Single hybrid motif"/>
    <property type="match status" value="1"/>
</dbReference>
<dbReference type="PROSITE" id="PS50968">
    <property type="entry name" value="BIOTINYL_LIPOYL"/>
    <property type="match status" value="1"/>
</dbReference>
<dbReference type="PROSITE" id="PS00189">
    <property type="entry name" value="LIPOYL"/>
    <property type="match status" value="1"/>
</dbReference>
<sequence length="125" mass="13158">MSLPTDRKYTTSHEWVKAEGDVFVVGITENAQDQLGDLVFVGDVSVGANLKAGETAGVVESVKAASDIYAPVDGVIVAFNDELEANPNLINESAFTAWIFKIKPLNAADADKLLDAAGYEAVANG</sequence>
<comment type="function">
    <text evidence="1">The glycine cleavage system catalyzes the degradation of glycine. The H protein shuttles the methylamine group of glycine from the P protein to the T protein.</text>
</comment>
<comment type="cofactor">
    <cofactor evidence="1">
        <name>(R)-lipoate</name>
        <dbReference type="ChEBI" id="CHEBI:83088"/>
    </cofactor>
    <text evidence="1">Binds 1 lipoyl cofactor covalently.</text>
</comment>
<comment type="subunit">
    <text evidence="1">The glycine cleavage system is composed of four proteins: P, T, L and H.</text>
</comment>
<comment type="similarity">
    <text evidence="1">Belongs to the GcvH family.</text>
</comment>
<reference key="1">
    <citation type="journal article" date="2006" name="J. Bacteriol.">
        <title>Comparison of the genome sequence of the poultry pathogen Bordetella avium with those of B. bronchiseptica, B. pertussis, and B. parapertussis reveals extensive diversity in surface structures associated with host interaction.</title>
        <authorList>
            <person name="Sebaihia M."/>
            <person name="Preston A."/>
            <person name="Maskell D.J."/>
            <person name="Kuzmiak H."/>
            <person name="Connell T.D."/>
            <person name="King N.D."/>
            <person name="Orndorff P.E."/>
            <person name="Miyamoto D.M."/>
            <person name="Thomson N.R."/>
            <person name="Harris D."/>
            <person name="Goble A."/>
            <person name="Lord A."/>
            <person name="Murphy L."/>
            <person name="Quail M.A."/>
            <person name="Rutter S."/>
            <person name="Squares R."/>
            <person name="Squares S."/>
            <person name="Woodward J."/>
            <person name="Parkhill J."/>
            <person name="Temple L.M."/>
        </authorList>
    </citation>
    <scope>NUCLEOTIDE SEQUENCE [LARGE SCALE GENOMIC DNA]</scope>
    <source>
        <strain>197N</strain>
    </source>
</reference>
<feature type="chain" id="PRO_0000302357" description="Glycine cleavage system H protein">
    <location>
        <begin position="1"/>
        <end position="125"/>
    </location>
</feature>
<feature type="domain" description="Lipoyl-binding" evidence="2">
    <location>
        <begin position="22"/>
        <end position="103"/>
    </location>
</feature>
<feature type="modified residue" description="N6-lipoyllysine" evidence="1">
    <location>
        <position position="63"/>
    </location>
</feature>
<name>GCSH_BORA1</name>
<protein>
    <recommendedName>
        <fullName evidence="1">Glycine cleavage system H protein</fullName>
    </recommendedName>
</protein>
<gene>
    <name evidence="1" type="primary">gcvH</name>
    <name type="ordered locus">BAV0492</name>
</gene>